<feature type="chain" id="PRO_1000205595" description="Large ribosomal subunit protein bL28">
    <location>
        <begin position="1"/>
        <end position="68"/>
    </location>
</feature>
<feature type="region of interest" description="Disordered" evidence="2">
    <location>
        <begin position="1"/>
        <end position="30"/>
    </location>
</feature>
<feature type="compositionally biased region" description="Polar residues" evidence="2">
    <location>
        <begin position="13"/>
        <end position="22"/>
    </location>
</feature>
<comment type="similarity">
    <text evidence="1">Belongs to the bacterial ribosomal protein bL28 family.</text>
</comment>
<gene>
    <name evidence="1" type="primary">rpmB</name>
    <name type="ordered locus">DMR_39910</name>
</gene>
<evidence type="ECO:0000255" key="1">
    <source>
        <dbReference type="HAMAP-Rule" id="MF_00373"/>
    </source>
</evidence>
<evidence type="ECO:0000256" key="2">
    <source>
        <dbReference type="SAM" id="MobiDB-lite"/>
    </source>
</evidence>
<evidence type="ECO:0000305" key="3"/>
<accession>C4XNY1</accession>
<organism>
    <name type="scientific">Solidesulfovibrio magneticus (strain ATCC 700980 / DSM 13731 / RS-1)</name>
    <name type="common">Desulfovibrio magneticus</name>
    <dbReference type="NCBI Taxonomy" id="573370"/>
    <lineage>
        <taxon>Bacteria</taxon>
        <taxon>Pseudomonadati</taxon>
        <taxon>Thermodesulfobacteriota</taxon>
        <taxon>Desulfovibrionia</taxon>
        <taxon>Desulfovibrionales</taxon>
        <taxon>Desulfovibrionaceae</taxon>
        <taxon>Solidesulfovibrio</taxon>
    </lineage>
</organism>
<reference key="1">
    <citation type="journal article" date="2009" name="Genome Res.">
        <title>Whole genome sequence of Desulfovibrio magneticus strain RS-1 revealed common gene clusters in magnetotactic bacteria.</title>
        <authorList>
            <person name="Nakazawa H."/>
            <person name="Arakaki A."/>
            <person name="Narita-Yamada S."/>
            <person name="Yashiro I."/>
            <person name="Jinno K."/>
            <person name="Aoki N."/>
            <person name="Tsuruyama A."/>
            <person name="Okamura Y."/>
            <person name="Tanikawa S."/>
            <person name="Fujita N."/>
            <person name="Takeyama H."/>
            <person name="Matsunaga T."/>
        </authorList>
    </citation>
    <scope>NUCLEOTIDE SEQUENCE [LARGE SCALE GENOMIC DNA]</scope>
    <source>
        <strain>ATCC 700980 / DSM 13731 / RS-1</strain>
    </source>
</reference>
<sequence>MAKICDHCGKKPQSGNNVSHANNKSKRRFEPNLVSVRAQLPSGEVKTVTVCTRCLRSGAVVKPVAKHA</sequence>
<keyword id="KW-0687">Ribonucleoprotein</keyword>
<keyword id="KW-0689">Ribosomal protein</keyword>
<dbReference type="EMBL" id="AP010904">
    <property type="protein sequence ID" value="BAH77482.1"/>
    <property type="molecule type" value="Genomic_DNA"/>
</dbReference>
<dbReference type="RefSeq" id="WP_006917954.1">
    <property type="nucleotide sequence ID" value="NC_012796.1"/>
</dbReference>
<dbReference type="SMR" id="C4XNY1"/>
<dbReference type="STRING" id="573370.DMR_39910"/>
<dbReference type="KEGG" id="dma:DMR_39910"/>
<dbReference type="eggNOG" id="COG0227">
    <property type="taxonomic scope" value="Bacteria"/>
</dbReference>
<dbReference type="HOGENOM" id="CLU_064548_7_0_7"/>
<dbReference type="OrthoDB" id="9805609at2"/>
<dbReference type="Proteomes" id="UP000009071">
    <property type="component" value="Chromosome"/>
</dbReference>
<dbReference type="GO" id="GO:1990904">
    <property type="term" value="C:ribonucleoprotein complex"/>
    <property type="evidence" value="ECO:0007669"/>
    <property type="project" value="UniProtKB-KW"/>
</dbReference>
<dbReference type="GO" id="GO:0005840">
    <property type="term" value="C:ribosome"/>
    <property type="evidence" value="ECO:0007669"/>
    <property type="project" value="UniProtKB-KW"/>
</dbReference>
<dbReference type="GO" id="GO:0003735">
    <property type="term" value="F:structural constituent of ribosome"/>
    <property type="evidence" value="ECO:0007669"/>
    <property type="project" value="InterPro"/>
</dbReference>
<dbReference type="GO" id="GO:0006412">
    <property type="term" value="P:translation"/>
    <property type="evidence" value="ECO:0007669"/>
    <property type="project" value="UniProtKB-UniRule"/>
</dbReference>
<dbReference type="Gene3D" id="2.30.170.40">
    <property type="entry name" value="Ribosomal protein L28/L24"/>
    <property type="match status" value="1"/>
</dbReference>
<dbReference type="HAMAP" id="MF_00373">
    <property type="entry name" value="Ribosomal_bL28"/>
    <property type="match status" value="1"/>
</dbReference>
<dbReference type="InterPro" id="IPR050096">
    <property type="entry name" value="Bacterial_rp_bL28"/>
</dbReference>
<dbReference type="InterPro" id="IPR026569">
    <property type="entry name" value="Ribosomal_bL28"/>
</dbReference>
<dbReference type="InterPro" id="IPR034704">
    <property type="entry name" value="Ribosomal_bL28/bL31-like_sf"/>
</dbReference>
<dbReference type="InterPro" id="IPR001383">
    <property type="entry name" value="Ribosomal_bL28_bact-type"/>
</dbReference>
<dbReference type="InterPro" id="IPR037147">
    <property type="entry name" value="Ribosomal_bL28_sf"/>
</dbReference>
<dbReference type="NCBIfam" id="TIGR00009">
    <property type="entry name" value="L28"/>
    <property type="match status" value="1"/>
</dbReference>
<dbReference type="PANTHER" id="PTHR39080">
    <property type="entry name" value="50S RIBOSOMAL PROTEIN L28"/>
    <property type="match status" value="1"/>
</dbReference>
<dbReference type="PANTHER" id="PTHR39080:SF1">
    <property type="entry name" value="LARGE RIBOSOMAL SUBUNIT PROTEIN BL28A"/>
    <property type="match status" value="1"/>
</dbReference>
<dbReference type="Pfam" id="PF00830">
    <property type="entry name" value="Ribosomal_L28"/>
    <property type="match status" value="1"/>
</dbReference>
<dbReference type="SUPFAM" id="SSF143800">
    <property type="entry name" value="L28p-like"/>
    <property type="match status" value="1"/>
</dbReference>
<proteinExistence type="inferred from homology"/>
<name>RL28_SOLM1</name>
<protein>
    <recommendedName>
        <fullName evidence="1">Large ribosomal subunit protein bL28</fullName>
    </recommendedName>
    <alternativeName>
        <fullName evidence="3">50S ribosomal protein L28</fullName>
    </alternativeName>
</protein>